<comment type="function">
    <text evidence="1">Part of the Tol-Pal system, which plays a role in outer membrane invagination during cell division and is important for maintaining outer membrane integrity.</text>
</comment>
<comment type="subunit">
    <text evidence="1">The Tol-Pal system is composed of five core proteins: the inner membrane proteins TolA, TolQ and TolR, the periplasmic protein TolB and the outer membrane protein Pal. They form a network linking the inner and outer membranes and the peptidoglycan layer.</text>
</comment>
<comment type="subcellular location">
    <subcellularLocation>
        <location evidence="1">Periplasm</location>
    </subcellularLocation>
</comment>
<comment type="similarity">
    <text evidence="1">Belongs to the TolB family.</text>
</comment>
<comment type="sequence caution" evidence="2">
    <conflict type="erroneous initiation">
        <sequence resource="EMBL-CDS" id="ABC76754"/>
    </conflict>
</comment>
<keyword id="KW-0131">Cell cycle</keyword>
<keyword id="KW-0132">Cell division</keyword>
<keyword id="KW-0574">Periplasm</keyword>
<keyword id="KW-1185">Reference proteome</keyword>
<keyword id="KW-0732">Signal</keyword>
<dbReference type="EMBL" id="CP000252">
    <property type="protein sequence ID" value="ABC76754.1"/>
    <property type="status" value="ALT_INIT"/>
    <property type="molecule type" value="Genomic_DNA"/>
</dbReference>
<dbReference type="SMR" id="Q2LRP7"/>
<dbReference type="FunCoup" id="Q2LRP7">
    <property type="interactions" value="38"/>
</dbReference>
<dbReference type="STRING" id="56780.SYN_00188"/>
<dbReference type="KEGG" id="sat:SYN_00188"/>
<dbReference type="eggNOG" id="COG0823">
    <property type="taxonomic scope" value="Bacteria"/>
</dbReference>
<dbReference type="HOGENOM" id="CLU_047123_2_0_7"/>
<dbReference type="InParanoid" id="Q2LRP7"/>
<dbReference type="Proteomes" id="UP000001933">
    <property type="component" value="Chromosome"/>
</dbReference>
<dbReference type="GO" id="GO:0042597">
    <property type="term" value="C:periplasmic space"/>
    <property type="evidence" value="ECO:0007669"/>
    <property type="project" value="UniProtKB-SubCell"/>
</dbReference>
<dbReference type="GO" id="GO:0051301">
    <property type="term" value="P:cell division"/>
    <property type="evidence" value="ECO:0007669"/>
    <property type="project" value="UniProtKB-KW"/>
</dbReference>
<dbReference type="GO" id="GO:0017038">
    <property type="term" value="P:protein import"/>
    <property type="evidence" value="ECO:0007669"/>
    <property type="project" value="InterPro"/>
</dbReference>
<dbReference type="Gene3D" id="2.120.10.30">
    <property type="entry name" value="TolB, C-terminal domain"/>
    <property type="match status" value="2"/>
</dbReference>
<dbReference type="Gene3D" id="3.40.50.10070">
    <property type="entry name" value="TolB, N-terminal domain"/>
    <property type="match status" value="1"/>
</dbReference>
<dbReference type="HAMAP" id="MF_00671">
    <property type="entry name" value="TolB"/>
    <property type="match status" value="1"/>
</dbReference>
<dbReference type="InterPro" id="IPR011042">
    <property type="entry name" value="6-blade_b-propeller_TolB-like"/>
</dbReference>
<dbReference type="InterPro" id="IPR011659">
    <property type="entry name" value="PD40"/>
</dbReference>
<dbReference type="InterPro" id="IPR014167">
    <property type="entry name" value="Tol-Pal_TolB"/>
</dbReference>
<dbReference type="InterPro" id="IPR007195">
    <property type="entry name" value="TolB_N"/>
</dbReference>
<dbReference type="NCBIfam" id="TIGR02800">
    <property type="entry name" value="propeller_TolB"/>
    <property type="match status" value="1"/>
</dbReference>
<dbReference type="PANTHER" id="PTHR36842:SF1">
    <property type="entry name" value="PROTEIN TOLB"/>
    <property type="match status" value="1"/>
</dbReference>
<dbReference type="PANTHER" id="PTHR36842">
    <property type="entry name" value="PROTEIN TOLB HOMOLOG"/>
    <property type="match status" value="1"/>
</dbReference>
<dbReference type="Pfam" id="PF07676">
    <property type="entry name" value="PD40"/>
    <property type="match status" value="5"/>
</dbReference>
<dbReference type="Pfam" id="PF04052">
    <property type="entry name" value="TolB_N"/>
    <property type="match status" value="1"/>
</dbReference>
<dbReference type="SUPFAM" id="SSF52964">
    <property type="entry name" value="TolB, N-terminal domain"/>
    <property type="match status" value="1"/>
</dbReference>
<dbReference type="SUPFAM" id="SSF69304">
    <property type="entry name" value="Tricorn protease N-terminal domain"/>
    <property type="match status" value="1"/>
</dbReference>
<organism>
    <name type="scientific">Syntrophus aciditrophicus (strain SB)</name>
    <dbReference type="NCBI Taxonomy" id="56780"/>
    <lineage>
        <taxon>Bacteria</taxon>
        <taxon>Pseudomonadati</taxon>
        <taxon>Thermodesulfobacteriota</taxon>
        <taxon>Syntrophia</taxon>
        <taxon>Syntrophales</taxon>
        <taxon>Syntrophaceae</taxon>
        <taxon>Syntrophus</taxon>
    </lineage>
</organism>
<name>TOLB_SYNAS</name>
<gene>
    <name evidence="1" type="primary">tolB</name>
    <name type="ordered locus">SYNAS_08750</name>
    <name type="ORF">SYN_00188</name>
</gene>
<evidence type="ECO:0000255" key="1">
    <source>
        <dbReference type="HAMAP-Rule" id="MF_00671"/>
    </source>
</evidence>
<evidence type="ECO:0000305" key="2"/>
<feature type="signal peptide" evidence="1">
    <location>
        <begin position="1"/>
        <end position="31"/>
    </location>
</feature>
<feature type="chain" id="PRO_0000259094" description="Tol-Pal system protein TolB" evidence="1">
    <location>
        <begin position="32"/>
        <end position="452"/>
    </location>
</feature>
<protein>
    <recommendedName>
        <fullName evidence="1">Tol-Pal system protein TolB</fullName>
    </recommendedName>
</protein>
<reference key="1">
    <citation type="journal article" date="2007" name="Proc. Natl. Acad. Sci. U.S.A.">
        <title>The genome of Syntrophus aciditrophicus: life at the thermodynamic limit of microbial growth.</title>
        <authorList>
            <person name="McInerney M.J."/>
            <person name="Rohlin L."/>
            <person name="Mouttaki H."/>
            <person name="Kim U."/>
            <person name="Krupp R.S."/>
            <person name="Rios-Hernandez L."/>
            <person name="Sieber J."/>
            <person name="Struchtemeyer C.G."/>
            <person name="Bhattacharyya A."/>
            <person name="Campbell J.W."/>
            <person name="Gunsalus R.P."/>
        </authorList>
    </citation>
    <scope>NUCLEOTIDE SEQUENCE [LARGE SCALE GENOMIC DNA]</scope>
    <source>
        <strain>SB</strain>
    </source>
</reference>
<accession>Q2LRP7</accession>
<proteinExistence type="inferred from homology"/>
<sequence>MCGVRRGMGVLLLFCAVALCAMPFVVRSVWGKVYIDIDSPAFQKIPIAVADFAPLNGNQGHADLSSWFPGAVRKTLDLTGYFNILNRTGGPRDQSQTGAVQAQAAYGEWRSLGAEYLIQGGFSSRGTQLVAEFRLIDIVQGRQLMGKQYTGGFEDRRDMVIRFVQEVLSLLTGGEGFFDTRIAFVVRQGRSSSLHTVGFGSQIDGRDLARVAGSPSLILSPRWSPDGRYLAFSSYRDGKPDIFVVSPSGSGLKKIVSFQGLNLPGAWSPDGRSLLLTLSKDGNEEIYVMDVRSGQVRRLTRNSAIDVSPVWSPDGRRIAFVSNISGSPQIYVMNADGGDVRRLTYSGNYNTTPAWSPRGGKIAYEGKVGSGYQIFSIDEDGGNVRQLTSGAGDHEFPSWSPDGRFLTFSLRSGGRSRINILNANTLEVRTLYESTDRCLGPAWSPRLKQALR</sequence>